<keyword id="KW-0012">Acyltransferase</keyword>
<keyword id="KW-0997">Cell inner membrane</keyword>
<keyword id="KW-1003">Cell membrane</keyword>
<keyword id="KW-0444">Lipid biosynthesis</keyword>
<keyword id="KW-0443">Lipid metabolism</keyword>
<keyword id="KW-0472">Membrane</keyword>
<keyword id="KW-0594">Phospholipid biosynthesis</keyword>
<keyword id="KW-1208">Phospholipid metabolism</keyword>
<keyword id="KW-0808">Transferase</keyword>
<reference key="1">
    <citation type="journal article" date="2005" name="J. Bacteriol.">
        <title>Whole-genome sequence analysis of Pseudomonas syringae pv. phaseolicola 1448A reveals divergence among pathovars in genes involved in virulence and transposition.</title>
        <authorList>
            <person name="Joardar V."/>
            <person name="Lindeberg M."/>
            <person name="Jackson R.W."/>
            <person name="Selengut J."/>
            <person name="Dodson R."/>
            <person name="Brinkac L.M."/>
            <person name="Daugherty S.C."/>
            <person name="DeBoy R.T."/>
            <person name="Durkin A.S."/>
            <person name="Gwinn Giglio M."/>
            <person name="Madupu R."/>
            <person name="Nelson W.C."/>
            <person name="Rosovitz M.J."/>
            <person name="Sullivan S.A."/>
            <person name="Crabtree J."/>
            <person name="Creasy T."/>
            <person name="Davidsen T.M."/>
            <person name="Haft D.H."/>
            <person name="Zafar N."/>
            <person name="Zhou L."/>
            <person name="Halpin R."/>
            <person name="Holley T."/>
            <person name="Khouri H.M."/>
            <person name="Feldblyum T.V."/>
            <person name="White O."/>
            <person name="Fraser C.M."/>
            <person name="Chatterjee A.K."/>
            <person name="Cartinhour S."/>
            <person name="Schneider D."/>
            <person name="Mansfield J.W."/>
            <person name="Collmer A."/>
            <person name="Buell R."/>
        </authorList>
    </citation>
    <scope>NUCLEOTIDE SEQUENCE [LARGE SCALE GENOMIC DNA]</scope>
    <source>
        <strain>1448A / Race 6</strain>
    </source>
</reference>
<comment type="catalytic activity">
    <reaction evidence="1">
        <text>sn-glycerol 3-phosphate + an acyl-CoA = a 1-acyl-sn-glycero-3-phosphate + CoA</text>
        <dbReference type="Rhea" id="RHEA:15325"/>
        <dbReference type="ChEBI" id="CHEBI:57287"/>
        <dbReference type="ChEBI" id="CHEBI:57597"/>
        <dbReference type="ChEBI" id="CHEBI:57970"/>
        <dbReference type="ChEBI" id="CHEBI:58342"/>
        <dbReference type="EC" id="2.3.1.15"/>
    </reaction>
</comment>
<comment type="pathway">
    <text evidence="1">Phospholipid metabolism; CDP-diacylglycerol biosynthesis; CDP-diacylglycerol from sn-glycerol 3-phosphate: step 1/3.</text>
</comment>
<comment type="subcellular location">
    <subcellularLocation>
        <location evidence="1">Cell inner membrane</location>
        <topology evidence="1">Peripheral membrane protein</topology>
        <orientation evidence="1">Cytoplasmic side</orientation>
    </subcellularLocation>
</comment>
<comment type="domain">
    <text evidence="1">The HXXXXD motif is essential for acyltransferase activity and may constitute the binding site for the phosphate moiety of the glycerol-3-phosphate.</text>
</comment>
<comment type="similarity">
    <text evidence="1">Belongs to the GPAT/DAPAT family.</text>
</comment>
<protein>
    <recommendedName>
        <fullName evidence="1">Glycerol-3-phosphate acyltransferase</fullName>
        <shortName evidence="1">GPAT</shortName>
        <ecNumber evidence="1">2.3.1.15</ecNumber>
    </recommendedName>
</protein>
<organism>
    <name type="scientific">Pseudomonas savastanoi pv. phaseolicola (strain 1448A / Race 6)</name>
    <name type="common">Pseudomonas syringae pv. phaseolicola (strain 1448A / Race 6)</name>
    <dbReference type="NCBI Taxonomy" id="264730"/>
    <lineage>
        <taxon>Bacteria</taxon>
        <taxon>Pseudomonadati</taxon>
        <taxon>Pseudomonadota</taxon>
        <taxon>Gammaproteobacteria</taxon>
        <taxon>Pseudomonadales</taxon>
        <taxon>Pseudomonadaceae</taxon>
        <taxon>Pseudomonas</taxon>
    </lineage>
</organism>
<dbReference type="EC" id="2.3.1.15" evidence="1"/>
<dbReference type="EMBL" id="CP000058">
    <property type="protein sequence ID" value="AAZ33585.1"/>
    <property type="molecule type" value="Genomic_DNA"/>
</dbReference>
<dbReference type="RefSeq" id="WP_011169304.1">
    <property type="nucleotide sequence ID" value="NC_005773.3"/>
</dbReference>
<dbReference type="SMR" id="Q48F46"/>
<dbReference type="KEGG" id="psp:PSPPH_3853"/>
<dbReference type="eggNOG" id="COG2937">
    <property type="taxonomic scope" value="Bacteria"/>
</dbReference>
<dbReference type="HOGENOM" id="CLU_015407_0_0_6"/>
<dbReference type="UniPathway" id="UPA00557">
    <property type="reaction ID" value="UER00612"/>
</dbReference>
<dbReference type="Proteomes" id="UP000000551">
    <property type="component" value="Chromosome"/>
</dbReference>
<dbReference type="GO" id="GO:0005886">
    <property type="term" value="C:plasma membrane"/>
    <property type="evidence" value="ECO:0007669"/>
    <property type="project" value="UniProtKB-SubCell"/>
</dbReference>
<dbReference type="GO" id="GO:0004366">
    <property type="term" value="F:glycerol-3-phosphate O-acyltransferase activity"/>
    <property type="evidence" value="ECO:0007669"/>
    <property type="project" value="UniProtKB-UniRule"/>
</dbReference>
<dbReference type="GO" id="GO:0016024">
    <property type="term" value="P:CDP-diacylglycerol biosynthetic process"/>
    <property type="evidence" value="ECO:0007669"/>
    <property type="project" value="UniProtKB-UniRule"/>
</dbReference>
<dbReference type="GO" id="GO:0006631">
    <property type="term" value="P:fatty acid metabolic process"/>
    <property type="evidence" value="ECO:0007669"/>
    <property type="project" value="TreeGrafter"/>
</dbReference>
<dbReference type="CDD" id="cd07993">
    <property type="entry name" value="LPLAT_DHAPAT-like"/>
    <property type="match status" value="1"/>
</dbReference>
<dbReference type="HAMAP" id="MF_00393">
    <property type="entry name" value="Glyc3P_acyltrans"/>
    <property type="match status" value="1"/>
</dbReference>
<dbReference type="InterPro" id="IPR022284">
    <property type="entry name" value="GPAT/DHAPAT"/>
</dbReference>
<dbReference type="InterPro" id="IPR045520">
    <property type="entry name" value="GPAT/DHAPAT_C"/>
</dbReference>
<dbReference type="InterPro" id="IPR041728">
    <property type="entry name" value="GPAT/DHAPAT_LPLAT"/>
</dbReference>
<dbReference type="InterPro" id="IPR028354">
    <property type="entry name" value="GPAT_PlsB"/>
</dbReference>
<dbReference type="InterPro" id="IPR002123">
    <property type="entry name" value="Plipid/glycerol_acylTrfase"/>
</dbReference>
<dbReference type="NCBIfam" id="TIGR03703">
    <property type="entry name" value="plsB"/>
    <property type="match status" value="1"/>
</dbReference>
<dbReference type="NCBIfam" id="NF003441">
    <property type="entry name" value="PRK04974.1"/>
    <property type="match status" value="1"/>
</dbReference>
<dbReference type="PANTHER" id="PTHR12563:SF17">
    <property type="entry name" value="DIHYDROXYACETONE PHOSPHATE ACYLTRANSFERASE"/>
    <property type="match status" value="1"/>
</dbReference>
<dbReference type="PANTHER" id="PTHR12563">
    <property type="entry name" value="GLYCEROL-3-PHOSPHATE ACYLTRANSFERASE"/>
    <property type="match status" value="1"/>
</dbReference>
<dbReference type="Pfam" id="PF01553">
    <property type="entry name" value="Acyltransferase"/>
    <property type="match status" value="1"/>
</dbReference>
<dbReference type="Pfam" id="PF19277">
    <property type="entry name" value="GPAT_C"/>
    <property type="match status" value="1"/>
</dbReference>
<dbReference type="PIRSF" id="PIRSF500064">
    <property type="entry name" value="GPAT"/>
    <property type="match status" value="1"/>
</dbReference>
<dbReference type="PIRSF" id="PIRSF000437">
    <property type="entry name" value="GPAT_DHAPAT"/>
    <property type="match status" value="1"/>
</dbReference>
<dbReference type="SMART" id="SM00563">
    <property type="entry name" value="PlsC"/>
    <property type="match status" value="1"/>
</dbReference>
<dbReference type="SUPFAM" id="SSF69593">
    <property type="entry name" value="Glycerol-3-phosphate (1)-acyltransferase"/>
    <property type="match status" value="1"/>
</dbReference>
<evidence type="ECO:0000255" key="1">
    <source>
        <dbReference type="HAMAP-Rule" id="MF_00393"/>
    </source>
</evidence>
<proteinExistence type="inferred from homology"/>
<sequence>MTRSPFRRLVFGTLRRLLYLWVRSETINQSSFTLNLDRSRPVFYALQSPSISDLAVIDTECRKAGLPRPVLSVAVGNLIEPAAFFYLTPAPDWLGRQDKRGAPPTLERLVAAVSQNPGEDAQIIPVSVFWGQSPDRESSAWKLLFADSWAVTGRLRRLVSILILGRKTRVQFSAPIHMRELVGENKGYELTLRMTQRLLRVHFRNLKSAVIGPDVSHRRTVVKGLLDEPLVKQAIIEEAERENITQDKARDRALSYGNEIASDYTYSVIRFMEVVLSWFWNKIYDGIKVSHIEGVQEVAPGHEVIYVPCHRSHIDYLLLSYLLFCNGLTPPHIAAGINLNMPVVGSLLRRGGAFFMRRTFKGNPLYTAVFTEYLHTLFIKGFPVEYFVEGGRSRTGRMLQPKTGMLAITLRSFLRNSRMPIVFVPLYIGYERVLEGRTYLGELRGATKKKESIFDIFKVIGALKQRFGQVSVNFGAPIKLAEFLDGEQPDWREQALAPQFRPEWLSETTHRLGERVAQHLNEAAAVNPMNLVAVALLSTQRLALDDQAMERVLDLYLTLLRAVPYSPHTTLPEGDGRSLIEHVKGMDLLAEQKDALGKILYLNEQNAVLMTYYRNNVLHIFALPSLLASFFQSSSRMSREQILRYTRALYPFLQSELFIRWPLSELDEVVDQWLAAFVEQGLLRFKKDVYVRPEPSSREFVLLTLLSRAIAQTLQRFYMAIALLLNSGQNTLSAEQLEDLCTVMAQRLSILHGLNAPEFFDKSLFRHFIQTLLDLGVLRKDSAGKLSYHPMLGELAEGAAKRVLPAEIRLSIRQVALHSNEEEQDAGNGEGVA</sequence>
<name>PLSB_PSE14</name>
<gene>
    <name evidence="1" type="primary">plsB</name>
    <name type="ordered locus">PSPPH_3853</name>
</gene>
<feature type="chain" id="PRO_1000049440" description="Glycerol-3-phosphate acyltransferase">
    <location>
        <begin position="1"/>
        <end position="833"/>
    </location>
</feature>
<feature type="short sequence motif" description="HXXXXD motif">
    <location>
        <begin position="309"/>
        <end position="314"/>
    </location>
</feature>
<accession>Q48F46</accession>